<reference key="1">
    <citation type="journal article" date="1992" name="Nucleic Acids Res.">
        <title>The INO2 gene of Saccharomyces cerevisiae encodes a helix-loop-helix protein that is required for activation of phospholipid synthesis.</title>
        <authorList>
            <person name="Nikoloff D.M."/>
            <person name="McGraw P."/>
            <person name="Henry S.A."/>
        </authorList>
    </citation>
    <scope>NUCLEOTIDE SEQUENCE [GENOMIC DNA]</scope>
</reference>
<reference key="2">
    <citation type="journal article" date="1994" name="J. Biochem.">
        <title>Cloning and characterization of the SCS1 gene required for the expression of genes in yeast phospholipid synthesis.</title>
        <authorList>
            <person name="Hosaka K."/>
            <person name="Nikawa J."/>
            <person name="Kodaki T."/>
            <person name="Yamashita S."/>
        </authorList>
    </citation>
    <scope>NUCLEOTIDE SEQUENCE [GENOMIC DNA]</scope>
</reference>
<reference key="3">
    <citation type="journal article" date="1997" name="Nature">
        <title>The nucleotide sequence of Saccharomyces cerevisiae chromosome IV.</title>
        <authorList>
            <person name="Jacq C."/>
            <person name="Alt-Moerbe J."/>
            <person name="Andre B."/>
            <person name="Arnold W."/>
            <person name="Bahr A."/>
            <person name="Ballesta J.P.G."/>
            <person name="Bargues M."/>
            <person name="Baron L."/>
            <person name="Becker A."/>
            <person name="Biteau N."/>
            <person name="Bloecker H."/>
            <person name="Blugeon C."/>
            <person name="Boskovic J."/>
            <person name="Brandt P."/>
            <person name="Brueckner M."/>
            <person name="Buitrago M.J."/>
            <person name="Coster F."/>
            <person name="Delaveau T."/>
            <person name="del Rey F."/>
            <person name="Dujon B."/>
            <person name="Eide L.G."/>
            <person name="Garcia-Cantalejo J.M."/>
            <person name="Goffeau A."/>
            <person name="Gomez-Peris A."/>
            <person name="Granotier C."/>
            <person name="Hanemann V."/>
            <person name="Hankeln T."/>
            <person name="Hoheisel J.D."/>
            <person name="Jaeger W."/>
            <person name="Jimenez A."/>
            <person name="Jonniaux J.-L."/>
            <person name="Kraemer C."/>
            <person name="Kuester H."/>
            <person name="Laamanen P."/>
            <person name="Legros Y."/>
            <person name="Louis E.J."/>
            <person name="Moeller-Rieker S."/>
            <person name="Monnet A."/>
            <person name="Moro M."/>
            <person name="Mueller-Auer S."/>
            <person name="Nussbaumer B."/>
            <person name="Paricio N."/>
            <person name="Paulin L."/>
            <person name="Perea J."/>
            <person name="Perez-Alonso M."/>
            <person name="Perez-Ortin J.E."/>
            <person name="Pohl T.M."/>
            <person name="Prydz H."/>
            <person name="Purnelle B."/>
            <person name="Rasmussen S.W."/>
            <person name="Remacha M.A."/>
            <person name="Revuelta J.L."/>
            <person name="Rieger M."/>
            <person name="Salom D."/>
            <person name="Saluz H.P."/>
            <person name="Saiz J.E."/>
            <person name="Saren A.-M."/>
            <person name="Schaefer M."/>
            <person name="Scharfe M."/>
            <person name="Schmidt E.R."/>
            <person name="Schneider C."/>
            <person name="Scholler P."/>
            <person name="Schwarz S."/>
            <person name="Soler-Mira A."/>
            <person name="Urrestarazu L.A."/>
            <person name="Verhasselt P."/>
            <person name="Vissers S."/>
            <person name="Voet M."/>
            <person name="Volckaert G."/>
            <person name="Wagner G."/>
            <person name="Wambutt R."/>
            <person name="Wedler E."/>
            <person name="Wedler H."/>
            <person name="Woelfl S."/>
            <person name="Harris D.E."/>
            <person name="Bowman S."/>
            <person name="Brown D."/>
            <person name="Churcher C.M."/>
            <person name="Connor R."/>
            <person name="Dedman K."/>
            <person name="Gentles S."/>
            <person name="Hamlin N."/>
            <person name="Hunt S."/>
            <person name="Jones L."/>
            <person name="McDonald S."/>
            <person name="Murphy L.D."/>
            <person name="Niblett D."/>
            <person name="Odell C."/>
            <person name="Oliver K."/>
            <person name="Rajandream M.A."/>
            <person name="Richards C."/>
            <person name="Shore L."/>
            <person name="Walsh S.V."/>
            <person name="Barrell B.G."/>
            <person name="Dietrich F.S."/>
            <person name="Mulligan J.T."/>
            <person name="Allen E."/>
            <person name="Araujo R."/>
            <person name="Aviles E."/>
            <person name="Berno A."/>
            <person name="Carpenter J."/>
            <person name="Chen E."/>
            <person name="Cherry J.M."/>
            <person name="Chung E."/>
            <person name="Duncan M."/>
            <person name="Hunicke-Smith S."/>
            <person name="Hyman R.W."/>
            <person name="Komp C."/>
            <person name="Lashkari D."/>
            <person name="Lew H."/>
            <person name="Lin D."/>
            <person name="Mosedale D."/>
            <person name="Nakahara K."/>
            <person name="Namath A."/>
            <person name="Oefner P."/>
            <person name="Oh C."/>
            <person name="Petel F.X."/>
            <person name="Roberts D."/>
            <person name="Schramm S."/>
            <person name="Schroeder M."/>
            <person name="Shogren T."/>
            <person name="Shroff N."/>
            <person name="Winant A."/>
            <person name="Yelton M.A."/>
            <person name="Botstein D."/>
            <person name="Davis R.W."/>
            <person name="Johnston M."/>
            <person name="Andrews S."/>
            <person name="Brinkman R."/>
            <person name="Cooper J."/>
            <person name="Ding H."/>
            <person name="Du Z."/>
            <person name="Favello A."/>
            <person name="Fulton L."/>
            <person name="Gattung S."/>
            <person name="Greco T."/>
            <person name="Hallsworth K."/>
            <person name="Hawkins J."/>
            <person name="Hillier L.W."/>
            <person name="Jier M."/>
            <person name="Johnson D."/>
            <person name="Johnston L."/>
            <person name="Kirsten J."/>
            <person name="Kucaba T."/>
            <person name="Langston Y."/>
            <person name="Latreille P."/>
            <person name="Le T."/>
            <person name="Mardis E."/>
            <person name="Menezes S."/>
            <person name="Miller N."/>
            <person name="Nhan M."/>
            <person name="Pauley A."/>
            <person name="Peluso D."/>
            <person name="Rifkin L."/>
            <person name="Riles L."/>
            <person name="Taich A."/>
            <person name="Trevaskis E."/>
            <person name="Vignati D."/>
            <person name="Wilcox L."/>
            <person name="Wohldman P."/>
            <person name="Vaudin M."/>
            <person name="Wilson R."/>
            <person name="Waterston R."/>
            <person name="Albermann K."/>
            <person name="Hani J."/>
            <person name="Heumann K."/>
            <person name="Kleine K."/>
            <person name="Mewes H.-W."/>
            <person name="Zollner A."/>
            <person name="Zaccaria P."/>
        </authorList>
    </citation>
    <scope>NUCLEOTIDE SEQUENCE [LARGE SCALE GENOMIC DNA]</scope>
    <source>
        <strain>ATCC 204508 / S288c</strain>
    </source>
</reference>
<reference key="4">
    <citation type="journal article" date="2014" name="G3 (Bethesda)">
        <title>The reference genome sequence of Saccharomyces cerevisiae: Then and now.</title>
        <authorList>
            <person name="Engel S.R."/>
            <person name="Dietrich F.S."/>
            <person name="Fisk D.G."/>
            <person name="Binkley G."/>
            <person name="Balakrishnan R."/>
            <person name="Costanzo M.C."/>
            <person name="Dwight S.S."/>
            <person name="Hitz B.C."/>
            <person name="Karra K."/>
            <person name="Nash R.S."/>
            <person name="Weng S."/>
            <person name="Wong E.D."/>
            <person name="Lloyd P."/>
            <person name="Skrzypek M.S."/>
            <person name="Miyasato S.R."/>
            <person name="Simison M."/>
            <person name="Cherry J.M."/>
        </authorList>
    </citation>
    <scope>GENOME REANNOTATION</scope>
    <source>
        <strain>ATCC 204508 / S288c</strain>
    </source>
</reference>
<reference key="5">
    <citation type="journal article" date="2007" name="Genome Res.">
        <title>Approaching a complete repository of sequence-verified protein-encoding clones for Saccharomyces cerevisiae.</title>
        <authorList>
            <person name="Hu Y."/>
            <person name="Rolfs A."/>
            <person name="Bhullar B."/>
            <person name="Murthy T.V.S."/>
            <person name="Zhu C."/>
            <person name="Berger M.F."/>
            <person name="Camargo A.A."/>
            <person name="Kelley F."/>
            <person name="McCarron S."/>
            <person name="Jepson D."/>
            <person name="Richardson A."/>
            <person name="Raphael J."/>
            <person name="Moreira D."/>
            <person name="Taycher E."/>
            <person name="Zuo D."/>
            <person name="Mohr S."/>
            <person name="Kane M.F."/>
            <person name="Williamson J."/>
            <person name="Simpson A.J.G."/>
            <person name="Bulyk M.L."/>
            <person name="Harlow E."/>
            <person name="Marsischky G."/>
            <person name="Kolodner R.D."/>
            <person name="LaBaer J."/>
        </authorList>
    </citation>
    <scope>NUCLEOTIDE SEQUENCE [GENOMIC DNA]</scope>
    <source>
        <strain>ATCC 204508 / S288c</strain>
    </source>
</reference>
<reference key="6">
    <citation type="journal article" date="1994" name="J. Biol. Chem.">
        <title>Functional characterization of the INO2 gene of Saccharomyces cerevisiae. A positive regulator of phospholipid biosynthesis.</title>
        <authorList>
            <person name="Nikoloff D.M."/>
            <person name="Henry S.A."/>
        </authorList>
    </citation>
    <scope>CHARACTERIZATION</scope>
</reference>
<reference key="7">
    <citation type="journal article" date="1995" name="Mol. Microbiol.">
        <title>Isolation and characterization of genes that promote the expression of inositol transporter gene ITR1 in Saccharomyces cerevisiae.</title>
        <authorList>
            <person name="Nikawa J."/>
            <person name="Hosaka K."/>
        </authorList>
    </citation>
    <scope>CHARACTERIZATION</scope>
</reference>
<reference key="8">
    <citation type="journal article" date="2003" name="Nature">
        <title>Global analysis of protein expression in yeast.</title>
        <authorList>
            <person name="Ghaemmaghami S."/>
            <person name="Huh W.-K."/>
            <person name="Bower K."/>
            <person name="Howson R.W."/>
            <person name="Belle A."/>
            <person name="Dephoure N."/>
            <person name="O'Shea E.K."/>
            <person name="Weissman J.S."/>
        </authorList>
    </citation>
    <scope>LEVEL OF PROTEIN EXPRESSION [LARGE SCALE ANALYSIS]</scope>
</reference>
<gene>
    <name type="primary">INO2</name>
    <name type="synonym">DIE1</name>
    <name type="synonym">SCS1</name>
    <name type="ordered locus">YDR123C</name>
    <name type="ORF">YD9727.18C</name>
</gene>
<protein>
    <recommendedName>
        <fullName>Protein INO2</fullName>
    </recommendedName>
</protein>
<dbReference type="EMBL" id="X66066">
    <property type="protein sequence ID" value="CAA46866.1"/>
    <property type="molecule type" value="Genomic_DNA"/>
</dbReference>
<dbReference type="EMBL" id="D90460">
    <property type="protein sequence ID" value="BAA14424.1"/>
    <property type="molecule type" value="Genomic_DNA"/>
</dbReference>
<dbReference type="EMBL" id="Z48758">
    <property type="protein sequence ID" value="CAA88676.1"/>
    <property type="molecule type" value="Genomic_DNA"/>
</dbReference>
<dbReference type="EMBL" id="AY557685">
    <property type="protein sequence ID" value="AAS56011.1"/>
    <property type="molecule type" value="Genomic_DNA"/>
</dbReference>
<dbReference type="EMBL" id="BK006938">
    <property type="protein sequence ID" value="DAA11969.1"/>
    <property type="molecule type" value="Genomic_DNA"/>
</dbReference>
<dbReference type="PIR" id="S21570">
    <property type="entry name" value="S21570"/>
</dbReference>
<dbReference type="RefSeq" id="NP_010408.1">
    <property type="nucleotide sequence ID" value="NM_001180431.1"/>
</dbReference>
<dbReference type="PDB" id="7XQ5">
    <property type="method" value="X-ray"/>
    <property type="resolution" value="2.25 A"/>
    <property type="chains" value="B=231-303"/>
</dbReference>
<dbReference type="PDBsum" id="7XQ5"/>
<dbReference type="SMR" id="P26798"/>
<dbReference type="BioGRID" id="32179">
    <property type="interactions" value="520"/>
</dbReference>
<dbReference type="ComplexPortal" id="CPX-1277">
    <property type="entry name" value="INO2-INO4 transcription activation complex"/>
</dbReference>
<dbReference type="DIP" id="DIP-680N"/>
<dbReference type="FunCoup" id="P26798">
    <property type="interactions" value="2103"/>
</dbReference>
<dbReference type="IntAct" id="P26798">
    <property type="interactions" value="3"/>
</dbReference>
<dbReference type="MINT" id="P26798"/>
<dbReference type="STRING" id="4932.YDR123C"/>
<dbReference type="PaxDb" id="4932-YDR123C"/>
<dbReference type="PeptideAtlas" id="P26798"/>
<dbReference type="EnsemblFungi" id="YDR123C_mRNA">
    <property type="protein sequence ID" value="YDR123C"/>
    <property type="gene ID" value="YDR123C"/>
</dbReference>
<dbReference type="GeneID" id="851701"/>
<dbReference type="KEGG" id="sce:YDR123C"/>
<dbReference type="AGR" id="SGD:S000002530"/>
<dbReference type="SGD" id="S000002530">
    <property type="gene designation" value="INO2"/>
</dbReference>
<dbReference type="VEuPathDB" id="FungiDB:YDR123C"/>
<dbReference type="eggNOG" id="ENOG502S8Z5">
    <property type="taxonomic scope" value="Eukaryota"/>
</dbReference>
<dbReference type="HOGENOM" id="CLU_052055_0_0_1"/>
<dbReference type="InParanoid" id="P26798"/>
<dbReference type="OMA" id="YEMINNE"/>
<dbReference type="OrthoDB" id="3973009at2759"/>
<dbReference type="BioCyc" id="YEAST:G3O-29723-MONOMER"/>
<dbReference type="BioGRID-ORCS" id="851701">
    <property type="hits" value="2 hits in 10 CRISPR screens"/>
</dbReference>
<dbReference type="PRO" id="PR:P26798"/>
<dbReference type="Proteomes" id="UP000002311">
    <property type="component" value="Chromosome IV"/>
</dbReference>
<dbReference type="RNAct" id="P26798">
    <property type="molecule type" value="protein"/>
</dbReference>
<dbReference type="GO" id="GO:0005634">
    <property type="term" value="C:nucleus"/>
    <property type="evidence" value="ECO:0000314"/>
    <property type="project" value="SGD"/>
</dbReference>
<dbReference type="GO" id="GO:0090575">
    <property type="term" value="C:RNA polymerase II transcription regulator complex"/>
    <property type="evidence" value="ECO:0000314"/>
    <property type="project" value="SGD"/>
</dbReference>
<dbReference type="GO" id="GO:0003677">
    <property type="term" value="F:DNA binding"/>
    <property type="evidence" value="ECO:0007669"/>
    <property type="project" value="UniProtKB-KW"/>
</dbReference>
<dbReference type="GO" id="GO:0046983">
    <property type="term" value="F:protein dimerization activity"/>
    <property type="evidence" value="ECO:0007669"/>
    <property type="project" value="InterPro"/>
</dbReference>
<dbReference type="GO" id="GO:0008654">
    <property type="term" value="P:phospholipid biosynthetic process"/>
    <property type="evidence" value="ECO:0000314"/>
    <property type="project" value="ComplexPortal"/>
</dbReference>
<dbReference type="GO" id="GO:0045944">
    <property type="term" value="P:positive regulation of transcription by RNA polymerase II"/>
    <property type="evidence" value="ECO:0000314"/>
    <property type="project" value="ComplexPortal"/>
</dbReference>
<dbReference type="CDD" id="cd11388">
    <property type="entry name" value="bHLH_ScINO2_like"/>
    <property type="match status" value="1"/>
</dbReference>
<dbReference type="InterPro" id="IPR011598">
    <property type="entry name" value="bHLH_dom"/>
</dbReference>
<dbReference type="InterPro" id="IPR036638">
    <property type="entry name" value="HLH_DNA-bd_sf"/>
</dbReference>
<dbReference type="Pfam" id="PF23179">
    <property type="entry name" value="bHLH_INO2"/>
    <property type="match status" value="1"/>
</dbReference>
<dbReference type="SMART" id="SM00353">
    <property type="entry name" value="HLH"/>
    <property type="match status" value="1"/>
</dbReference>
<dbReference type="SUPFAM" id="SSF47459">
    <property type="entry name" value="HLH, helix-loop-helix DNA-binding domain"/>
    <property type="match status" value="1"/>
</dbReference>
<dbReference type="PROSITE" id="PS50888">
    <property type="entry name" value="BHLH"/>
    <property type="match status" value="1"/>
</dbReference>
<name>INO2_YEAST</name>
<proteinExistence type="evidence at protein level"/>
<keyword id="KW-0002">3D-structure</keyword>
<keyword id="KW-0010">Activator</keyword>
<keyword id="KW-0238">DNA-binding</keyword>
<keyword id="KW-0444">Lipid biosynthesis</keyword>
<keyword id="KW-0443">Lipid metabolism</keyword>
<keyword id="KW-0539">Nucleus</keyword>
<keyword id="KW-0594">Phospholipid biosynthesis</keyword>
<keyword id="KW-1208">Phospholipid metabolism</keyword>
<keyword id="KW-1185">Reference proteome</keyword>
<keyword id="KW-0804">Transcription</keyword>
<keyword id="KW-0805">Transcription regulation</keyword>
<sequence>MQQATGNELLGILDLDNDIDFETAYQMLSSNFDDQMSAHIHENTFSATSPPLLTHELGIIPNVATVQPSHVETIPADNQTHHAPLHTHAHYLNHNPHQPSMGFDQALGLKLSPSSSGLLSTNESNAIEQFLDNLISQDMMSSNASMNSESHLHIRSPKKQHRYTELNQRYPETHPHSNTGELPTNTADVPTEFTTREGPHQPIGNDHYNPPPFSVPEIRIPDSDIPANIEDDPVKVRKWKHVQMEKIRRINTKEAFERLIKSVRTPPKENGKRIPKHILLTCVMNDIKSIRSANEALQHILDDS</sequence>
<evidence type="ECO:0000250" key="1"/>
<evidence type="ECO:0000255" key="2">
    <source>
        <dbReference type="PROSITE-ProRule" id="PRU00981"/>
    </source>
</evidence>
<evidence type="ECO:0000269" key="3">
    <source>
    </source>
</evidence>
<evidence type="ECO:0000305" key="4"/>
<evidence type="ECO:0007829" key="5">
    <source>
        <dbReference type="PDB" id="7XQ5"/>
    </source>
</evidence>
<organism>
    <name type="scientific">Saccharomyces cerevisiae (strain ATCC 204508 / S288c)</name>
    <name type="common">Baker's yeast</name>
    <dbReference type="NCBI Taxonomy" id="559292"/>
    <lineage>
        <taxon>Eukaryota</taxon>
        <taxon>Fungi</taxon>
        <taxon>Dikarya</taxon>
        <taxon>Ascomycota</taxon>
        <taxon>Saccharomycotina</taxon>
        <taxon>Saccharomycetes</taxon>
        <taxon>Saccharomycetales</taxon>
        <taxon>Saccharomycetaceae</taxon>
        <taxon>Saccharomyces</taxon>
    </lineage>
</organism>
<comment type="function">
    <text>Positive regulatory factor required for depression of the coregulated phospholipid biosynthetic enzymes. Also involved in the expression of ITR1.</text>
</comment>
<comment type="subunit">
    <text evidence="1">Efficient DNA binding requires dimerization with another bHLH protein.</text>
</comment>
<comment type="interaction">
    <interactant intactId="EBI-9262">
        <id>P26798</id>
    </interactant>
    <interactant intactId="EBI-9270">
        <id>P13902</id>
        <label>INO4</label>
    </interactant>
    <organismsDiffer>false</organismsDiffer>
    <experiments>2</experiments>
</comment>
<comment type="subcellular location">
    <subcellularLocation>
        <location evidence="4">Nucleus</location>
    </subcellularLocation>
</comment>
<comment type="miscellaneous">
    <text evidence="3">Present with 784 molecules/cell in log phase SD medium.</text>
</comment>
<accession>P26798</accession>
<accession>D6VSA9</accession>
<feature type="chain" id="PRO_0000127253" description="Protein INO2">
    <location>
        <begin position="1"/>
        <end position="304"/>
    </location>
</feature>
<feature type="domain" description="bHLH" evidence="2">
    <location>
        <begin position="236"/>
        <end position="290"/>
    </location>
</feature>
<feature type="helix" evidence="5">
    <location>
        <begin position="233"/>
        <end position="261"/>
    </location>
</feature>
<feature type="helix" evidence="5">
    <location>
        <begin position="269"/>
        <end position="271"/>
    </location>
</feature>
<feature type="helix" evidence="5">
    <location>
        <begin position="276"/>
        <end position="301"/>
    </location>
</feature>